<evidence type="ECO:0000255" key="1"/>
<evidence type="ECO:0000255" key="2">
    <source>
        <dbReference type="PROSITE-ProRule" id="PRU00521"/>
    </source>
</evidence>
<evidence type="ECO:0000269" key="3">
    <source>
    </source>
</evidence>
<evidence type="ECO:0000305" key="4"/>
<protein>
    <recommendedName>
        <fullName>Olfactory receptor 8K1</fullName>
    </recommendedName>
    <alternativeName>
        <fullName>Olfactory receptor OR11-182</fullName>
    </alternativeName>
</protein>
<feature type="chain" id="PRO_0000150671" description="Olfactory receptor 8K1">
    <location>
        <begin position="1"/>
        <end position="319"/>
    </location>
</feature>
<feature type="topological domain" description="Extracellular" evidence="1">
    <location>
        <begin position="1"/>
        <end position="31"/>
    </location>
</feature>
<feature type="transmembrane region" description="Helical; Name=1" evidence="1">
    <location>
        <begin position="32"/>
        <end position="52"/>
    </location>
</feature>
<feature type="topological domain" description="Cytoplasmic" evidence="1">
    <location>
        <begin position="53"/>
        <end position="60"/>
    </location>
</feature>
<feature type="transmembrane region" description="Helical; Name=2" evidence="1">
    <location>
        <begin position="61"/>
        <end position="81"/>
    </location>
</feature>
<feature type="topological domain" description="Extracellular" evidence="1">
    <location>
        <begin position="82"/>
        <end position="105"/>
    </location>
</feature>
<feature type="transmembrane region" description="Helical; Name=3" evidence="1">
    <location>
        <begin position="106"/>
        <end position="126"/>
    </location>
</feature>
<feature type="topological domain" description="Cytoplasmic" evidence="1">
    <location>
        <begin position="127"/>
        <end position="145"/>
    </location>
</feature>
<feature type="transmembrane region" description="Helical; Name=4" evidence="1">
    <location>
        <begin position="146"/>
        <end position="166"/>
    </location>
</feature>
<feature type="topological domain" description="Extracellular" evidence="1">
    <location>
        <begin position="167"/>
        <end position="203"/>
    </location>
</feature>
<feature type="transmembrane region" description="Helical; Name=5" evidence="1">
    <location>
        <begin position="204"/>
        <end position="223"/>
    </location>
</feature>
<feature type="topological domain" description="Cytoplasmic" evidence="1">
    <location>
        <begin position="224"/>
        <end position="243"/>
    </location>
</feature>
<feature type="transmembrane region" description="Helical; Name=6" evidence="1">
    <location>
        <begin position="244"/>
        <end position="264"/>
    </location>
</feature>
<feature type="topological domain" description="Extracellular" evidence="1">
    <location>
        <begin position="265"/>
        <end position="277"/>
    </location>
</feature>
<feature type="transmembrane region" description="Helical; Name=7" evidence="1">
    <location>
        <begin position="278"/>
        <end position="298"/>
    </location>
</feature>
<feature type="topological domain" description="Cytoplasmic" evidence="1">
    <location>
        <begin position="299"/>
        <end position="319"/>
    </location>
</feature>
<feature type="glycosylation site" description="N-linked (GlcNAc...) asparagine" evidence="1">
    <location>
        <position position="8"/>
    </location>
</feature>
<feature type="sequence variant" id="VAR_034270" description="In dbSNP:rs10896271.">
    <original>M</original>
    <variation>V</variation>
    <location>
        <position position="21"/>
    </location>
</feature>
<feature type="sequence variant" id="VAR_034271" description="In dbSNP:rs10896272.">
    <original>P</original>
    <variation>T</variation>
    <location>
        <position position="27"/>
    </location>
</feature>
<feature type="sequence variant" id="VAR_034272" description="In dbSNP:rs17614327." evidence="3">
    <original>A</original>
    <variation>T</variation>
    <location>
        <position position="84"/>
    </location>
</feature>
<accession>Q8NGG5</accession>
<accession>B9EJB1</accession>
<accession>Q6IFC3</accession>
<accession>Q96RC1</accession>
<dbReference type="EMBL" id="AB065835">
    <property type="protein sequence ID" value="BAC06054.1"/>
    <property type="molecule type" value="Genomic_DNA"/>
</dbReference>
<dbReference type="EMBL" id="BC146844">
    <property type="protein sequence ID" value="AAI46845.1"/>
    <property type="molecule type" value="mRNA"/>
</dbReference>
<dbReference type="EMBL" id="AF399517">
    <property type="protein sequence ID" value="AAK95002.1"/>
    <property type="molecule type" value="Genomic_DNA"/>
</dbReference>
<dbReference type="EMBL" id="BK004339">
    <property type="protein sequence ID" value="DAA04737.1"/>
    <property type="molecule type" value="Genomic_DNA"/>
</dbReference>
<dbReference type="CCDS" id="CCDS31528.1"/>
<dbReference type="RefSeq" id="NP_001002907.1">
    <property type="nucleotide sequence ID" value="NM_001002907.1"/>
</dbReference>
<dbReference type="SMR" id="Q8NGG5"/>
<dbReference type="FunCoup" id="Q8NGG5">
    <property type="interactions" value="416"/>
</dbReference>
<dbReference type="STRING" id="9606.ENSP00000279783"/>
<dbReference type="GlyCosmos" id="Q8NGG5">
    <property type="glycosylation" value="1 site, No reported glycans"/>
</dbReference>
<dbReference type="GlyGen" id="Q8NGG5">
    <property type="glycosylation" value="1 site"/>
</dbReference>
<dbReference type="BioMuta" id="OR8K1"/>
<dbReference type="DMDM" id="38372688"/>
<dbReference type="MassIVE" id="Q8NGG5"/>
<dbReference type="PaxDb" id="9606-ENSP00000279783"/>
<dbReference type="Antibodypedia" id="58977">
    <property type="antibodies" value="92 antibodies from 20 providers"/>
</dbReference>
<dbReference type="DNASU" id="390157"/>
<dbReference type="Ensembl" id="ENST00000279783.5">
    <property type="protein sequence ID" value="ENSP00000279783.2"/>
    <property type="gene ID" value="ENSG00000150261.5"/>
</dbReference>
<dbReference type="Ensembl" id="ENST00000574800.2">
    <property type="protein sequence ID" value="ENSP00000461384.1"/>
    <property type="gene ID" value="ENSG00000263328.2"/>
</dbReference>
<dbReference type="Ensembl" id="ENST00000709014.1">
    <property type="protein sequence ID" value="ENSP00000517459.1"/>
    <property type="gene ID" value="ENSG00000291861.1"/>
</dbReference>
<dbReference type="GeneID" id="390157"/>
<dbReference type="KEGG" id="hsa:390157"/>
<dbReference type="MANE-Select" id="ENST00000279783.5">
    <property type="protein sequence ID" value="ENSP00000279783.2"/>
    <property type="RefSeq nucleotide sequence ID" value="NM_001002907.1"/>
    <property type="RefSeq protein sequence ID" value="NP_001002907.1"/>
</dbReference>
<dbReference type="UCSC" id="uc010rjg.2">
    <property type="organism name" value="human"/>
</dbReference>
<dbReference type="AGR" id="HGNC:14831"/>
<dbReference type="CTD" id="390157"/>
<dbReference type="GeneCards" id="OR8K1"/>
<dbReference type="HGNC" id="HGNC:14831">
    <property type="gene designation" value="OR8K1"/>
</dbReference>
<dbReference type="HPA" id="ENSG00000150261">
    <property type="expression patterns" value="Not detected"/>
</dbReference>
<dbReference type="neXtProt" id="NX_Q8NGG5"/>
<dbReference type="PharmGKB" id="PA32775"/>
<dbReference type="VEuPathDB" id="HostDB:ENSG00000150261"/>
<dbReference type="eggNOG" id="ENOG502RU1H">
    <property type="taxonomic scope" value="Eukaryota"/>
</dbReference>
<dbReference type="GeneTree" id="ENSGT00950000182718"/>
<dbReference type="HOGENOM" id="CLU_012526_1_0_1"/>
<dbReference type="InParanoid" id="Q8NGG5"/>
<dbReference type="OMA" id="IRYFYCD"/>
<dbReference type="OrthoDB" id="9518048at2759"/>
<dbReference type="PAN-GO" id="Q8NGG5">
    <property type="GO annotations" value="4 GO annotations based on evolutionary models"/>
</dbReference>
<dbReference type="PhylomeDB" id="Q8NGG5"/>
<dbReference type="TreeFam" id="TF352753"/>
<dbReference type="PathwayCommons" id="Q8NGG5"/>
<dbReference type="Reactome" id="R-HSA-9752946">
    <property type="pathway name" value="Expression and translocation of olfactory receptors"/>
</dbReference>
<dbReference type="BioGRID-ORCS" id="390157">
    <property type="hits" value="29 hits in 737 CRISPR screens"/>
</dbReference>
<dbReference type="GeneWiki" id="OR8K1"/>
<dbReference type="GenomeRNAi" id="390157"/>
<dbReference type="Pharos" id="Q8NGG5">
    <property type="development level" value="Tdark"/>
</dbReference>
<dbReference type="PRO" id="PR:Q8NGG5"/>
<dbReference type="Proteomes" id="UP000005640">
    <property type="component" value="Chromosome 11"/>
</dbReference>
<dbReference type="RNAct" id="Q8NGG5">
    <property type="molecule type" value="protein"/>
</dbReference>
<dbReference type="Bgee" id="ENSG00000150261">
    <property type="expression patterns" value="Expressed in uterine cervix and 1 other cell type or tissue"/>
</dbReference>
<dbReference type="ExpressionAtlas" id="Q8NGG5">
    <property type="expression patterns" value="baseline and differential"/>
</dbReference>
<dbReference type="GO" id="GO:0005886">
    <property type="term" value="C:plasma membrane"/>
    <property type="evidence" value="ECO:0007669"/>
    <property type="project" value="UniProtKB-SubCell"/>
</dbReference>
<dbReference type="GO" id="GO:0004930">
    <property type="term" value="F:G protein-coupled receptor activity"/>
    <property type="evidence" value="ECO:0007669"/>
    <property type="project" value="UniProtKB-KW"/>
</dbReference>
<dbReference type="GO" id="GO:0004984">
    <property type="term" value="F:olfactory receptor activity"/>
    <property type="evidence" value="ECO:0007669"/>
    <property type="project" value="InterPro"/>
</dbReference>
<dbReference type="CDD" id="cd15413">
    <property type="entry name" value="7tmA_OR8K-like"/>
    <property type="match status" value="1"/>
</dbReference>
<dbReference type="FunFam" id="1.10.1220.70:FF:000001">
    <property type="entry name" value="Olfactory receptor"/>
    <property type="match status" value="1"/>
</dbReference>
<dbReference type="FunFam" id="1.20.1070.10:FF:000003">
    <property type="entry name" value="Olfactory receptor"/>
    <property type="match status" value="1"/>
</dbReference>
<dbReference type="Gene3D" id="1.20.1070.10">
    <property type="entry name" value="Rhodopsin 7-helix transmembrane proteins"/>
    <property type="match status" value="1"/>
</dbReference>
<dbReference type="InterPro" id="IPR000276">
    <property type="entry name" value="GPCR_Rhodpsn"/>
</dbReference>
<dbReference type="InterPro" id="IPR017452">
    <property type="entry name" value="GPCR_Rhodpsn_7TM"/>
</dbReference>
<dbReference type="InterPro" id="IPR000725">
    <property type="entry name" value="Olfact_rcpt"/>
</dbReference>
<dbReference type="PANTHER" id="PTHR48018">
    <property type="entry name" value="OLFACTORY RECEPTOR"/>
    <property type="match status" value="1"/>
</dbReference>
<dbReference type="Pfam" id="PF13853">
    <property type="entry name" value="7tm_4"/>
    <property type="match status" value="1"/>
</dbReference>
<dbReference type="PRINTS" id="PR00237">
    <property type="entry name" value="GPCRRHODOPSN"/>
</dbReference>
<dbReference type="PRINTS" id="PR00245">
    <property type="entry name" value="OLFACTORYR"/>
</dbReference>
<dbReference type="SUPFAM" id="SSF81321">
    <property type="entry name" value="Family A G protein-coupled receptor-like"/>
    <property type="match status" value="1"/>
</dbReference>
<dbReference type="PROSITE" id="PS00237">
    <property type="entry name" value="G_PROTEIN_RECEP_F1_1"/>
    <property type="match status" value="1"/>
</dbReference>
<dbReference type="PROSITE" id="PS50262">
    <property type="entry name" value="G_PROTEIN_RECEP_F1_2"/>
    <property type="match status" value="1"/>
</dbReference>
<gene>
    <name type="primary">OR8K1</name>
</gene>
<keyword id="KW-1003">Cell membrane</keyword>
<keyword id="KW-0297">G-protein coupled receptor</keyword>
<keyword id="KW-0325">Glycoprotein</keyword>
<keyword id="KW-0472">Membrane</keyword>
<keyword id="KW-0552">Olfaction</keyword>
<keyword id="KW-0675">Receptor</keyword>
<keyword id="KW-1185">Reference proteome</keyword>
<keyword id="KW-0716">Sensory transduction</keyword>
<keyword id="KW-0807">Transducer</keyword>
<keyword id="KW-0812">Transmembrane</keyword>
<keyword id="KW-1133">Transmembrane helix</keyword>
<comment type="function">
    <text evidence="4">Odorant receptor.</text>
</comment>
<comment type="subcellular location">
    <subcellularLocation>
        <location>Cell membrane</location>
        <topology>Multi-pass membrane protein</topology>
    </subcellularLocation>
</comment>
<comment type="similarity">
    <text evidence="2">Belongs to the G-protein coupled receptor 1 family.</text>
</comment>
<comment type="online information" name="Human Olfactory Receptor Data Exploratorium (HORDE)">
    <link uri="http://genome.weizmann.ac.il/horde/card/index/symbol:OR8K1"/>
</comment>
<proteinExistence type="evidence at transcript level"/>
<name>OR8K1_HUMAN</name>
<sequence length="319" mass="36581">MNHVVKHNHTAVTKVTEFILMGITDNPGLQAPLFGLFLIIYLVTVIGNLGMVILTYLDSKLHTPMYFFLRHLSITDLGYSTVIAPKMLVNFIVHKNTISYNWYATQLAFFEIFIISELFILSAMAYDRYVAICKPLLYVIIMAEKVLWVLVIVPYLYSTFVSLFLTIKLFKLSFCGSNIISYFYCDCIPLMSILCSDTNELELIILIFSGCNLLFSLSIVLISYMFILVAILRMNSRKGRYKAFSTCSSHLTVVIMFYGTLLFIYLQPKSSHTLAIDKMASVFYTLLIPMLNPLIYSLRNKEVKDALKRTLTNRFKIPI</sequence>
<organism>
    <name type="scientific">Homo sapiens</name>
    <name type="common">Human</name>
    <dbReference type="NCBI Taxonomy" id="9606"/>
    <lineage>
        <taxon>Eukaryota</taxon>
        <taxon>Metazoa</taxon>
        <taxon>Chordata</taxon>
        <taxon>Craniata</taxon>
        <taxon>Vertebrata</taxon>
        <taxon>Euteleostomi</taxon>
        <taxon>Mammalia</taxon>
        <taxon>Eutheria</taxon>
        <taxon>Euarchontoglires</taxon>
        <taxon>Primates</taxon>
        <taxon>Haplorrhini</taxon>
        <taxon>Catarrhini</taxon>
        <taxon>Hominidae</taxon>
        <taxon>Homo</taxon>
    </lineage>
</organism>
<reference key="1">
    <citation type="submission" date="2001-07" db="EMBL/GenBank/DDBJ databases">
        <title>Genome-wide discovery and analysis of human seven transmembrane helix receptor genes.</title>
        <authorList>
            <person name="Suwa M."/>
            <person name="Sato T."/>
            <person name="Okouchi I."/>
            <person name="Arita M."/>
            <person name="Futami K."/>
            <person name="Matsumoto S."/>
            <person name="Tsutsumi S."/>
            <person name="Aburatani H."/>
            <person name="Asai K."/>
            <person name="Akiyama Y."/>
        </authorList>
    </citation>
    <scope>NUCLEOTIDE SEQUENCE [GENOMIC DNA]</scope>
</reference>
<reference key="2">
    <citation type="journal article" date="2004" name="Genome Res.">
        <title>The status, quality, and expansion of the NIH full-length cDNA project: the Mammalian Gene Collection (MGC).</title>
        <authorList>
            <consortium name="The MGC Project Team"/>
        </authorList>
    </citation>
    <scope>NUCLEOTIDE SEQUENCE [LARGE SCALE MRNA]</scope>
    <scope>VARIANT THR-84</scope>
    <source>
        <tissue>Testis</tissue>
    </source>
</reference>
<reference key="3">
    <citation type="journal article" date="2002" name="Genomics">
        <title>DEFOG: a practical scheme for deciphering families of genes.</title>
        <authorList>
            <person name="Fuchs T."/>
            <person name="Malecova B."/>
            <person name="Linhart C."/>
            <person name="Sharan R."/>
            <person name="Khen M."/>
            <person name="Herwig R."/>
            <person name="Shmulevich D."/>
            <person name="Elkon R."/>
            <person name="Steinfath M."/>
            <person name="O'Brien J.K."/>
            <person name="Radelof U."/>
            <person name="Lehrach H."/>
            <person name="Lancet D."/>
            <person name="Shamir R."/>
        </authorList>
    </citation>
    <scope>NUCLEOTIDE SEQUENCE [GENOMIC DNA] OF 74-289</scope>
</reference>
<reference key="4">
    <citation type="journal article" date="2004" name="Proc. Natl. Acad. Sci. U.S.A.">
        <title>The human olfactory receptor gene family.</title>
        <authorList>
            <person name="Malnic B."/>
            <person name="Godfrey P.A."/>
            <person name="Buck L.B."/>
        </authorList>
    </citation>
    <scope>IDENTIFICATION</scope>
</reference>
<reference key="5">
    <citation type="journal article" date="2004" name="Proc. Natl. Acad. Sci. U.S.A.">
        <authorList>
            <person name="Malnic B."/>
            <person name="Godfrey P.A."/>
            <person name="Buck L.B."/>
        </authorList>
    </citation>
    <scope>ERRATUM OF PUBMED:14983052</scope>
</reference>